<protein>
    <recommendedName>
        <fullName evidence="1">Lipoyl synthase</fullName>
        <ecNumber evidence="1">2.8.1.8</ecNumber>
    </recommendedName>
    <alternativeName>
        <fullName evidence="1">Lip-syn</fullName>
        <shortName evidence="1">LS</shortName>
    </alternativeName>
    <alternativeName>
        <fullName evidence="1">Lipoate synthase</fullName>
    </alternativeName>
    <alternativeName>
        <fullName evidence="1">Lipoic acid synthase</fullName>
    </alternativeName>
    <alternativeName>
        <fullName evidence="1">Sulfur insertion protein LipA</fullName>
    </alternativeName>
</protein>
<gene>
    <name evidence="1" type="primary">lipA</name>
    <name type="ordered locus">BCAN_A1143</name>
</gene>
<organism>
    <name type="scientific">Brucella canis (strain ATCC 23365 / NCTC 10854 / RM-666)</name>
    <dbReference type="NCBI Taxonomy" id="483179"/>
    <lineage>
        <taxon>Bacteria</taxon>
        <taxon>Pseudomonadati</taxon>
        <taxon>Pseudomonadota</taxon>
        <taxon>Alphaproteobacteria</taxon>
        <taxon>Hyphomicrobiales</taxon>
        <taxon>Brucellaceae</taxon>
        <taxon>Brucella/Ochrobactrum group</taxon>
        <taxon>Brucella</taxon>
    </lineage>
</organism>
<sequence>MVTVLNTVNQSGRLRHPEKAHRPDNEVLKKPDWIRVKAPVSRGYGETREIVRSNKLVTVCEEAGCPNIGECWEKKHATFMIMGEICTRACAFCNISTGIPNALDPNEPENIAKAVKQMGLTHVVITSVDRDDLADGGAHHFAEVIKAVREAAPATTIEILTPDFLRKEGALEIVVKARPDVFNHNLETVPSKYLKVRPGARYFHSIRLLQRVKELDPTIFTKSGIMVGLGEERNEILQLMDDLRSADVDFMTIGQYLQPTRKHHPVIRFVKPDEFKSFETIGKTKGFLLVASSPLTRSSHHAGEDFAKLKAAREALYASRAS</sequence>
<dbReference type="EC" id="2.8.1.8" evidence="1"/>
<dbReference type="EMBL" id="CP000872">
    <property type="protein sequence ID" value="ABX62192.1"/>
    <property type="molecule type" value="Genomic_DNA"/>
</dbReference>
<dbReference type="RefSeq" id="WP_002964253.1">
    <property type="nucleotide sequence ID" value="NC_010103.1"/>
</dbReference>
<dbReference type="SMR" id="A9M5D7"/>
<dbReference type="GeneID" id="97533623"/>
<dbReference type="KEGG" id="bcs:BCAN_A1143"/>
<dbReference type="HOGENOM" id="CLU_033144_2_1_5"/>
<dbReference type="PhylomeDB" id="A9M5D7"/>
<dbReference type="UniPathway" id="UPA00538">
    <property type="reaction ID" value="UER00593"/>
</dbReference>
<dbReference type="Proteomes" id="UP000001385">
    <property type="component" value="Chromosome I"/>
</dbReference>
<dbReference type="GO" id="GO:0005737">
    <property type="term" value="C:cytoplasm"/>
    <property type="evidence" value="ECO:0007669"/>
    <property type="project" value="UniProtKB-SubCell"/>
</dbReference>
<dbReference type="GO" id="GO:0051539">
    <property type="term" value="F:4 iron, 4 sulfur cluster binding"/>
    <property type="evidence" value="ECO:0007669"/>
    <property type="project" value="UniProtKB-UniRule"/>
</dbReference>
<dbReference type="GO" id="GO:0016992">
    <property type="term" value="F:lipoate synthase activity"/>
    <property type="evidence" value="ECO:0007669"/>
    <property type="project" value="UniProtKB-UniRule"/>
</dbReference>
<dbReference type="GO" id="GO:0046872">
    <property type="term" value="F:metal ion binding"/>
    <property type="evidence" value="ECO:0007669"/>
    <property type="project" value="UniProtKB-KW"/>
</dbReference>
<dbReference type="CDD" id="cd01335">
    <property type="entry name" value="Radical_SAM"/>
    <property type="match status" value="1"/>
</dbReference>
<dbReference type="FunFam" id="3.20.20.70:FF:000040">
    <property type="entry name" value="Lipoyl synthase"/>
    <property type="match status" value="1"/>
</dbReference>
<dbReference type="Gene3D" id="3.20.20.70">
    <property type="entry name" value="Aldolase class I"/>
    <property type="match status" value="1"/>
</dbReference>
<dbReference type="HAMAP" id="MF_00206">
    <property type="entry name" value="Lipoyl_synth"/>
    <property type="match status" value="1"/>
</dbReference>
<dbReference type="InterPro" id="IPR013785">
    <property type="entry name" value="Aldolase_TIM"/>
</dbReference>
<dbReference type="InterPro" id="IPR006638">
    <property type="entry name" value="Elp3/MiaA/NifB-like_rSAM"/>
</dbReference>
<dbReference type="InterPro" id="IPR031691">
    <property type="entry name" value="LIAS_N"/>
</dbReference>
<dbReference type="InterPro" id="IPR003698">
    <property type="entry name" value="Lipoyl_synth"/>
</dbReference>
<dbReference type="InterPro" id="IPR007197">
    <property type="entry name" value="rSAM"/>
</dbReference>
<dbReference type="NCBIfam" id="TIGR00510">
    <property type="entry name" value="lipA"/>
    <property type="match status" value="1"/>
</dbReference>
<dbReference type="NCBIfam" id="NF004019">
    <property type="entry name" value="PRK05481.1"/>
    <property type="match status" value="1"/>
</dbReference>
<dbReference type="NCBIfam" id="NF009544">
    <property type="entry name" value="PRK12928.1"/>
    <property type="match status" value="1"/>
</dbReference>
<dbReference type="PANTHER" id="PTHR10949">
    <property type="entry name" value="LIPOYL SYNTHASE"/>
    <property type="match status" value="1"/>
</dbReference>
<dbReference type="PANTHER" id="PTHR10949:SF0">
    <property type="entry name" value="LIPOYL SYNTHASE, MITOCHONDRIAL"/>
    <property type="match status" value="1"/>
</dbReference>
<dbReference type="Pfam" id="PF16881">
    <property type="entry name" value="LIAS_N"/>
    <property type="match status" value="1"/>
</dbReference>
<dbReference type="Pfam" id="PF04055">
    <property type="entry name" value="Radical_SAM"/>
    <property type="match status" value="1"/>
</dbReference>
<dbReference type="PIRSF" id="PIRSF005963">
    <property type="entry name" value="Lipoyl_synth"/>
    <property type="match status" value="1"/>
</dbReference>
<dbReference type="SFLD" id="SFLDF00271">
    <property type="entry name" value="lipoyl_synthase"/>
    <property type="match status" value="1"/>
</dbReference>
<dbReference type="SFLD" id="SFLDG01058">
    <property type="entry name" value="lipoyl_synthase_like"/>
    <property type="match status" value="1"/>
</dbReference>
<dbReference type="SMART" id="SM00729">
    <property type="entry name" value="Elp3"/>
    <property type="match status" value="1"/>
</dbReference>
<dbReference type="SUPFAM" id="SSF102114">
    <property type="entry name" value="Radical SAM enzymes"/>
    <property type="match status" value="1"/>
</dbReference>
<dbReference type="PROSITE" id="PS51918">
    <property type="entry name" value="RADICAL_SAM"/>
    <property type="match status" value="1"/>
</dbReference>
<name>LIPA_BRUC2</name>
<accession>A9M5D7</accession>
<comment type="function">
    <text evidence="1">Catalyzes the radical-mediated insertion of two sulfur atoms into the C-6 and C-8 positions of the octanoyl moiety bound to the lipoyl domains of lipoate-dependent enzymes, thereby converting the octanoylated domains into lipoylated derivatives.</text>
</comment>
<comment type="catalytic activity">
    <reaction evidence="1">
        <text>[[Fe-S] cluster scaffold protein carrying a second [4Fe-4S](2+) cluster] + N(6)-octanoyl-L-lysyl-[protein] + 2 oxidized [2Fe-2S]-[ferredoxin] + 2 S-adenosyl-L-methionine + 4 H(+) = [[Fe-S] cluster scaffold protein] + N(6)-[(R)-dihydrolipoyl]-L-lysyl-[protein] + 4 Fe(3+) + 2 hydrogen sulfide + 2 5'-deoxyadenosine + 2 L-methionine + 2 reduced [2Fe-2S]-[ferredoxin]</text>
        <dbReference type="Rhea" id="RHEA:16585"/>
        <dbReference type="Rhea" id="RHEA-COMP:9928"/>
        <dbReference type="Rhea" id="RHEA-COMP:10000"/>
        <dbReference type="Rhea" id="RHEA-COMP:10001"/>
        <dbReference type="Rhea" id="RHEA-COMP:10475"/>
        <dbReference type="Rhea" id="RHEA-COMP:14568"/>
        <dbReference type="Rhea" id="RHEA-COMP:14569"/>
        <dbReference type="ChEBI" id="CHEBI:15378"/>
        <dbReference type="ChEBI" id="CHEBI:17319"/>
        <dbReference type="ChEBI" id="CHEBI:29034"/>
        <dbReference type="ChEBI" id="CHEBI:29919"/>
        <dbReference type="ChEBI" id="CHEBI:33722"/>
        <dbReference type="ChEBI" id="CHEBI:33737"/>
        <dbReference type="ChEBI" id="CHEBI:33738"/>
        <dbReference type="ChEBI" id="CHEBI:57844"/>
        <dbReference type="ChEBI" id="CHEBI:59789"/>
        <dbReference type="ChEBI" id="CHEBI:78809"/>
        <dbReference type="ChEBI" id="CHEBI:83100"/>
        <dbReference type="EC" id="2.8.1.8"/>
    </reaction>
</comment>
<comment type="cofactor">
    <cofactor evidence="1">
        <name>[4Fe-4S] cluster</name>
        <dbReference type="ChEBI" id="CHEBI:49883"/>
    </cofactor>
    <text evidence="1">Binds 2 [4Fe-4S] clusters per subunit. One cluster is coordinated with 3 cysteines and an exchangeable S-adenosyl-L-methionine.</text>
</comment>
<comment type="pathway">
    <text evidence="1">Protein modification; protein lipoylation via endogenous pathway; protein N(6)-(lipoyl)lysine from octanoyl-[acyl-carrier-protein]: step 2/2.</text>
</comment>
<comment type="subcellular location">
    <subcellularLocation>
        <location evidence="1">Cytoplasm</location>
    </subcellularLocation>
</comment>
<comment type="similarity">
    <text evidence="1">Belongs to the radical SAM superfamily. Lipoyl synthase family.</text>
</comment>
<reference key="1">
    <citation type="submission" date="2007-10" db="EMBL/GenBank/DDBJ databases">
        <title>Brucella canis ATCC 23365 whole genome shotgun sequencing project.</title>
        <authorList>
            <person name="Setubal J.C."/>
            <person name="Bowns C."/>
            <person name="Boyle S."/>
            <person name="Crasta O.R."/>
            <person name="Czar M.J."/>
            <person name="Dharmanolla C."/>
            <person name="Gillespie J.J."/>
            <person name="Kenyon R.W."/>
            <person name="Lu J."/>
            <person name="Mane S."/>
            <person name="Mohapatra S."/>
            <person name="Nagrani S."/>
            <person name="Purkayastha A."/>
            <person name="Rajasimha H.K."/>
            <person name="Shallom J.M."/>
            <person name="Shallom S."/>
            <person name="Shukla M."/>
            <person name="Snyder E.E."/>
            <person name="Sobral B.W."/>
            <person name="Wattam A.R."/>
            <person name="Will R."/>
            <person name="Williams K."/>
            <person name="Yoo H."/>
            <person name="Bruce D."/>
            <person name="Detter C."/>
            <person name="Munk C."/>
            <person name="Brettin T.S."/>
        </authorList>
    </citation>
    <scope>NUCLEOTIDE SEQUENCE [LARGE SCALE GENOMIC DNA]</scope>
    <source>
        <strain>ATCC 23365 / NCTC 10854 / RM-666</strain>
    </source>
</reference>
<feature type="chain" id="PRO_1000077950" description="Lipoyl synthase">
    <location>
        <begin position="1"/>
        <end position="322"/>
    </location>
</feature>
<feature type="domain" description="Radical SAM core" evidence="2">
    <location>
        <begin position="72"/>
        <end position="288"/>
    </location>
</feature>
<feature type="region of interest" description="Disordered" evidence="3">
    <location>
        <begin position="1"/>
        <end position="22"/>
    </location>
</feature>
<feature type="compositionally biased region" description="Polar residues" evidence="3">
    <location>
        <begin position="1"/>
        <end position="12"/>
    </location>
</feature>
<feature type="binding site" evidence="1">
    <location>
        <position position="60"/>
    </location>
    <ligand>
        <name>[4Fe-4S] cluster</name>
        <dbReference type="ChEBI" id="CHEBI:49883"/>
        <label>1</label>
    </ligand>
</feature>
<feature type="binding site" evidence="1">
    <location>
        <position position="65"/>
    </location>
    <ligand>
        <name>[4Fe-4S] cluster</name>
        <dbReference type="ChEBI" id="CHEBI:49883"/>
        <label>1</label>
    </ligand>
</feature>
<feature type="binding site" evidence="1">
    <location>
        <position position="71"/>
    </location>
    <ligand>
        <name>[4Fe-4S] cluster</name>
        <dbReference type="ChEBI" id="CHEBI:49883"/>
        <label>1</label>
    </ligand>
</feature>
<feature type="binding site" evidence="1">
    <location>
        <position position="86"/>
    </location>
    <ligand>
        <name>[4Fe-4S] cluster</name>
        <dbReference type="ChEBI" id="CHEBI:49883"/>
        <label>2</label>
        <note>4Fe-4S-S-AdoMet</note>
    </ligand>
</feature>
<feature type="binding site" evidence="1">
    <location>
        <position position="90"/>
    </location>
    <ligand>
        <name>[4Fe-4S] cluster</name>
        <dbReference type="ChEBI" id="CHEBI:49883"/>
        <label>2</label>
        <note>4Fe-4S-S-AdoMet</note>
    </ligand>
</feature>
<feature type="binding site" evidence="1">
    <location>
        <position position="93"/>
    </location>
    <ligand>
        <name>[4Fe-4S] cluster</name>
        <dbReference type="ChEBI" id="CHEBI:49883"/>
        <label>2</label>
        <note>4Fe-4S-S-AdoMet</note>
    </ligand>
</feature>
<feature type="binding site" evidence="1">
    <location>
        <position position="299"/>
    </location>
    <ligand>
        <name>[4Fe-4S] cluster</name>
        <dbReference type="ChEBI" id="CHEBI:49883"/>
        <label>1</label>
    </ligand>
</feature>
<evidence type="ECO:0000255" key="1">
    <source>
        <dbReference type="HAMAP-Rule" id="MF_00206"/>
    </source>
</evidence>
<evidence type="ECO:0000255" key="2">
    <source>
        <dbReference type="PROSITE-ProRule" id="PRU01266"/>
    </source>
</evidence>
<evidence type="ECO:0000256" key="3">
    <source>
        <dbReference type="SAM" id="MobiDB-lite"/>
    </source>
</evidence>
<keyword id="KW-0004">4Fe-4S</keyword>
<keyword id="KW-0963">Cytoplasm</keyword>
<keyword id="KW-0408">Iron</keyword>
<keyword id="KW-0411">Iron-sulfur</keyword>
<keyword id="KW-0479">Metal-binding</keyword>
<keyword id="KW-1185">Reference proteome</keyword>
<keyword id="KW-0949">S-adenosyl-L-methionine</keyword>
<keyword id="KW-0808">Transferase</keyword>
<proteinExistence type="inferred from homology"/>